<keyword id="KW-0997">Cell inner membrane</keyword>
<keyword id="KW-1003">Cell membrane</keyword>
<keyword id="KW-0963">Cytoplasm</keyword>
<keyword id="KW-0472">Membrane</keyword>
<keyword id="KW-1185">Reference proteome</keyword>
<reference key="1">
    <citation type="journal article" date="2006" name="J. Bacteriol.">
        <title>Genome sequence of Aeromonas hydrophila ATCC 7966T: jack of all trades.</title>
        <authorList>
            <person name="Seshadri R."/>
            <person name="Joseph S.W."/>
            <person name="Chopra A.K."/>
            <person name="Sha J."/>
            <person name="Shaw J."/>
            <person name="Graf J."/>
            <person name="Haft D.H."/>
            <person name="Wu M."/>
            <person name="Ren Q."/>
            <person name="Rosovitz M.J."/>
            <person name="Madupu R."/>
            <person name="Tallon L."/>
            <person name="Kim M."/>
            <person name="Jin S."/>
            <person name="Vuong H."/>
            <person name="Stine O.C."/>
            <person name="Ali A."/>
            <person name="Horneman A.J."/>
            <person name="Heidelberg J.F."/>
        </authorList>
    </citation>
    <scope>NUCLEOTIDE SEQUENCE [LARGE SCALE GENOMIC DNA]</scope>
    <source>
        <strain>ATCC 7966 / DSM 30187 / BCRC 13018 / CCUG 14551 / JCM 1027 / KCTC 2358 / NCIMB 9240 / NCTC 8049</strain>
    </source>
</reference>
<feature type="chain" id="PRO_1000045416" description="High frequency lysogenization protein HflD homolog">
    <location>
        <begin position="1"/>
        <end position="204"/>
    </location>
</feature>
<protein>
    <recommendedName>
        <fullName evidence="1">High frequency lysogenization protein HflD homolog</fullName>
    </recommendedName>
</protein>
<dbReference type="EMBL" id="CP000462">
    <property type="protein sequence ID" value="ABK36745.1"/>
    <property type="molecule type" value="Genomic_DNA"/>
</dbReference>
<dbReference type="RefSeq" id="WP_005334622.1">
    <property type="nucleotide sequence ID" value="NC_008570.1"/>
</dbReference>
<dbReference type="RefSeq" id="YP_855953.1">
    <property type="nucleotide sequence ID" value="NC_008570.1"/>
</dbReference>
<dbReference type="SMR" id="A0KI52"/>
<dbReference type="STRING" id="380703.AHA_1414"/>
<dbReference type="EnsemblBacteria" id="ABK36745">
    <property type="protein sequence ID" value="ABK36745"/>
    <property type="gene ID" value="AHA_1414"/>
</dbReference>
<dbReference type="GeneID" id="60844696"/>
<dbReference type="KEGG" id="aha:AHA_1414"/>
<dbReference type="PATRIC" id="fig|380703.7.peg.1422"/>
<dbReference type="eggNOG" id="COG2915">
    <property type="taxonomic scope" value="Bacteria"/>
</dbReference>
<dbReference type="HOGENOM" id="CLU_098920_0_0_6"/>
<dbReference type="OrthoDB" id="9788031at2"/>
<dbReference type="PRO" id="PR:A0KI52"/>
<dbReference type="Proteomes" id="UP000000756">
    <property type="component" value="Chromosome"/>
</dbReference>
<dbReference type="GO" id="GO:0005737">
    <property type="term" value="C:cytoplasm"/>
    <property type="evidence" value="ECO:0007669"/>
    <property type="project" value="UniProtKB-SubCell"/>
</dbReference>
<dbReference type="GO" id="GO:0005886">
    <property type="term" value="C:plasma membrane"/>
    <property type="evidence" value="ECO:0007669"/>
    <property type="project" value="UniProtKB-SubCell"/>
</dbReference>
<dbReference type="Gene3D" id="1.10.3890.10">
    <property type="entry name" value="HflD-like"/>
    <property type="match status" value="1"/>
</dbReference>
<dbReference type="HAMAP" id="MF_00695">
    <property type="entry name" value="HflD_protein"/>
    <property type="match status" value="1"/>
</dbReference>
<dbReference type="InterPro" id="IPR007451">
    <property type="entry name" value="HflD"/>
</dbReference>
<dbReference type="InterPro" id="IPR035932">
    <property type="entry name" value="HflD-like_sf"/>
</dbReference>
<dbReference type="NCBIfam" id="NF001246">
    <property type="entry name" value="PRK00218.1-2"/>
    <property type="match status" value="1"/>
</dbReference>
<dbReference type="NCBIfam" id="NF001248">
    <property type="entry name" value="PRK00218.1-4"/>
    <property type="match status" value="1"/>
</dbReference>
<dbReference type="PANTHER" id="PTHR38100">
    <property type="entry name" value="HIGH FREQUENCY LYSOGENIZATION PROTEIN HFLD"/>
    <property type="match status" value="1"/>
</dbReference>
<dbReference type="PANTHER" id="PTHR38100:SF1">
    <property type="entry name" value="HIGH FREQUENCY LYSOGENIZATION PROTEIN HFLD"/>
    <property type="match status" value="1"/>
</dbReference>
<dbReference type="Pfam" id="PF04356">
    <property type="entry name" value="DUF489"/>
    <property type="match status" value="1"/>
</dbReference>
<dbReference type="SUPFAM" id="SSF101322">
    <property type="entry name" value="YcfC-like"/>
    <property type="match status" value="1"/>
</dbReference>
<accession>A0KI52</accession>
<organism>
    <name type="scientific">Aeromonas hydrophila subsp. hydrophila (strain ATCC 7966 / DSM 30187 / BCRC 13018 / CCUG 14551 / JCM 1027 / KCTC 2358 / NCIMB 9240 / NCTC 8049)</name>
    <dbReference type="NCBI Taxonomy" id="380703"/>
    <lineage>
        <taxon>Bacteria</taxon>
        <taxon>Pseudomonadati</taxon>
        <taxon>Pseudomonadota</taxon>
        <taxon>Gammaproteobacteria</taxon>
        <taxon>Aeromonadales</taxon>
        <taxon>Aeromonadaceae</taxon>
        <taxon>Aeromonas</taxon>
    </lineage>
</organism>
<name>HFLD_AERHH</name>
<comment type="subcellular location">
    <subcellularLocation>
        <location>Cytoplasm</location>
    </subcellularLocation>
    <subcellularLocation>
        <location evidence="1">Cell inner membrane</location>
        <topology evidence="1">Peripheral membrane protein</topology>
        <orientation evidence="1">Cytoplasmic side</orientation>
    </subcellularLocation>
</comment>
<comment type="similarity">
    <text evidence="1">Belongs to the HflD family.</text>
</comment>
<sequence length="204" mass="22834">MSDKFQDRTMAFAGICQAAYLVQKVARDGSCDEAALRESLSSILVTNPSQPLEVFNNTHLAIRDGYRALVEQLGADGSQKNAELTRYVVSLIALERKLAKRKDILNMLGERISQIGRQQQHFDLLDEQILANMASIYSDLISPIGPRIQVAGTPLFLQQPLVQHKVRALLLAGIRACVLWRQLGGSRTQIIFARKKMVELAKRY</sequence>
<proteinExistence type="inferred from homology"/>
<evidence type="ECO:0000255" key="1">
    <source>
        <dbReference type="HAMAP-Rule" id="MF_00695"/>
    </source>
</evidence>
<gene>
    <name evidence="1" type="primary">hflD</name>
    <name type="ordered locus">AHA_1414</name>
</gene>